<organism>
    <name type="scientific">Pyropia yezoensis</name>
    <name type="common">Susabi-nori</name>
    <name type="synonym">Porphyra yezoensis</name>
    <dbReference type="NCBI Taxonomy" id="2788"/>
    <lineage>
        <taxon>Eukaryota</taxon>
        <taxon>Rhodophyta</taxon>
        <taxon>Bangiophyceae</taxon>
        <taxon>Bangiales</taxon>
        <taxon>Bangiaceae</taxon>
        <taxon>Pyropia</taxon>
    </lineage>
</organism>
<name>PSBF_PYRYE</name>
<protein>
    <recommendedName>
        <fullName evidence="1">Cytochrome b559 subunit beta</fullName>
    </recommendedName>
    <alternativeName>
        <fullName evidence="1">PSII reaction center subunit VI</fullName>
    </alternativeName>
</protein>
<sequence>MTKGNANQPVSYPIFTFRWLAIHGLAIPTVFFLGAITSMQFIQR</sequence>
<gene>
    <name evidence="1" type="primary">psbF</name>
</gene>
<feature type="chain" id="PRO_0000275743" description="Cytochrome b559 subunit beta">
    <location>
        <begin position="1"/>
        <end position="44"/>
    </location>
</feature>
<feature type="transmembrane region" description="Helical" evidence="1">
    <location>
        <begin position="19"/>
        <end position="35"/>
    </location>
</feature>
<feature type="binding site" description="axial binding residue" evidence="1">
    <location>
        <position position="23"/>
    </location>
    <ligand>
        <name>heme</name>
        <dbReference type="ChEBI" id="CHEBI:30413"/>
        <note>ligand shared with alpha subunit</note>
    </ligand>
    <ligandPart>
        <name>Fe</name>
        <dbReference type="ChEBI" id="CHEBI:18248"/>
    </ligandPart>
</feature>
<accession>Q1XD97</accession>
<comment type="function">
    <text evidence="1">This b-type cytochrome is tightly associated with the reaction center of photosystem II (PSII). PSII is a light-driven water:plastoquinone oxidoreductase that uses light energy to abstract electrons from H(2)O, generating O(2) and a proton gradient subsequently used for ATP formation. It consists of a core antenna complex that captures photons, and an electron transfer chain that converts photonic excitation into a charge separation.</text>
</comment>
<comment type="cofactor">
    <cofactor evidence="1">
        <name>heme b</name>
        <dbReference type="ChEBI" id="CHEBI:60344"/>
    </cofactor>
    <text evidence="1">With its partner (PsbE) binds heme. PSII binds additional chlorophylls, carotenoids and specific lipids.</text>
</comment>
<comment type="subunit">
    <text evidence="1">Heterodimer of an alpha subunit and a beta subunit. PSII is composed of 1 copy each of membrane proteins PsbA, PsbB, PsbC, PsbD, PsbE, PsbF, PsbH, PsbI, PsbJ, PsbK, PsbL, PsbM, PsbT, PsbX, PsbY, PsbZ, Psb30/Ycf12, at least 3 peripheral proteins of the oxygen-evolving complex and a large number of cofactors. It forms dimeric complexes.</text>
</comment>
<comment type="subcellular location">
    <subcellularLocation>
        <location evidence="1">Plastid</location>
        <location evidence="1">Chloroplast thylakoid membrane</location>
        <topology evidence="1">Single-pass membrane protein</topology>
    </subcellularLocation>
</comment>
<comment type="similarity">
    <text evidence="1">Belongs to the PsbE/PsbF family.</text>
</comment>
<dbReference type="EMBL" id="AP006715">
    <property type="protein sequence ID" value="BAE92514.1"/>
    <property type="molecule type" value="Genomic_DNA"/>
</dbReference>
<dbReference type="RefSeq" id="YP_537071.1">
    <property type="nucleotide sequence ID" value="NC_007932.1"/>
</dbReference>
<dbReference type="GeneID" id="3978781"/>
<dbReference type="GO" id="GO:0009535">
    <property type="term" value="C:chloroplast thylakoid membrane"/>
    <property type="evidence" value="ECO:0007669"/>
    <property type="project" value="UniProtKB-SubCell"/>
</dbReference>
<dbReference type="GO" id="GO:0009539">
    <property type="term" value="C:photosystem II reaction center"/>
    <property type="evidence" value="ECO:0007669"/>
    <property type="project" value="InterPro"/>
</dbReference>
<dbReference type="GO" id="GO:0009055">
    <property type="term" value="F:electron transfer activity"/>
    <property type="evidence" value="ECO:0007669"/>
    <property type="project" value="UniProtKB-UniRule"/>
</dbReference>
<dbReference type="GO" id="GO:0020037">
    <property type="term" value="F:heme binding"/>
    <property type="evidence" value="ECO:0007669"/>
    <property type="project" value="InterPro"/>
</dbReference>
<dbReference type="GO" id="GO:0005506">
    <property type="term" value="F:iron ion binding"/>
    <property type="evidence" value="ECO:0007669"/>
    <property type="project" value="UniProtKB-UniRule"/>
</dbReference>
<dbReference type="GO" id="GO:0009767">
    <property type="term" value="P:photosynthetic electron transport chain"/>
    <property type="evidence" value="ECO:0007669"/>
    <property type="project" value="InterPro"/>
</dbReference>
<dbReference type="HAMAP" id="MF_00643">
    <property type="entry name" value="PSII_PsbF"/>
    <property type="match status" value="1"/>
</dbReference>
<dbReference type="InterPro" id="IPR006241">
    <property type="entry name" value="PSII_cyt_b559_bsu"/>
</dbReference>
<dbReference type="InterPro" id="IPR006216">
    <property type="entry name" value="PSII_cyt_b559_CS"/>
</dbReference>
<dbReference type="InterPro" id="IPR013081">
    <property type="entry name" value="PSII_cyt_b559_N"/>
</dbReference>
<dbReference type="NCBIfam" id="TIGR01333">
    <property type="entry name" value="cyt_b559_beta"/>
    <property type="match status" value="1"/>
</dbReference>
<dbReference type="Pfam" id="PF00283">
    <property type="entry name" value="Cytochrom_B559"/>
    <property type="match status" value="1"/>
</dbReference>
<dbReference type="PIRSF" id="PIRSF000037">
    <property type="entry name" value="PsbF"/>
    <property type="match status" value="1"/>
</dbReference>
<dbReference type="SUPFAM" id="SSF161045">
    <property type="entry name" value="Cytochrome b559 subunits"/>
    <property type="match status" value="1"/>
</dbReference>
<dbReference type="PROSITE" id="PS00537">
    <property type="entry name" value="CYTOCHROME_B559"/>
    <property type="match status" value="1"/>
</dbReference>
<geneLocation type="chloroplast"/>
<keyword id="KW-0150">Chloroplast</keyword>
<keyword id="KW-0249">Electron transport</keyword>
<keyword id="KW-0349">Heme</keyword>
<keyword id="KW-0408">Iron</keyword>
<keyword id="KW-0472">Membrane</keyword>
<keyword id="KW-0479">Metal-binding</keyword>
<keyword id="KW-0602">Photosynthesis</keyword>
<keyword id="KW-0604">Photosystem II</keyword>
<keyword id="KW-0934">Plastid</keyword>
<keyword id="KW-0793">Thylakoid</keyword>
<keyword id="KW-0812">Transmembrane</keyword>
<keyword id="KW-1133">Transmembrane helix</keyword>
<keyword id="KW-0813">Transport</keyword>
<proteinExistence type="inferred from homology"/>
<reference key="1">
    <citation type="submission" date="2003-11" db="EMBL/GenBank/DDBJ databases">
        <title>Whole genome sequence of Porphyra yezoensis chloroplast.</title>
        <authorList>
            <person name="Kunimoto M."/>
            <person name="Morishima K."/>
            <person name="Yoshikawa M."/>
            <person name="Fukuda S."/>
            <person name="Kobayashi T."/>
            <person name="Kobayashi M."/>
            <person name="Okazaki T."/>
            <person name="Ohara I."/>
            <person name="Nakayama I."/>
        </authorList>
    </citation>
    <scope>NUCLEOTIDE SEQUENCE [LARGE SCALE GENOMIC DNA]</scope>
    <source>
        <strain>U-51</strain>
    </source>
</reference>
<evidence type="ECO:0000255" key="1">
    <source>
        <dbReference type="HAMAP-Rule" id="MF_00643"/>
    </source>
</evidence>